<proteinExistence type="inferred from homology"/>
<name>HOKD_ECOLI</name>
<sequence>MKQQKAMLIALIVICLTVIVTALVTRKDLCEVRIRTGQTEVAVFTAYEPEE</sequence>
<organism>
    <name type="scientific">Escherichia coli (strain K12)</name>
    <dbReference type="NCBI Taxonomy" id="83333"/>
    <lineage>
        <taxon>Bacteria</taxon>
        <taxon>Pseudomonadati</taxon>
        <taxon>Pseudomonadota</taxon>
        <taxon>Gammaproteobacteria</taxon>
        <taxon>Enterobacterales</taxon>
        <taxon>Enterobacteriaceae</taxon>
        <taxon>Escherichia</taxon>
    </lineage>
</organism>
<dbReference type="EMBL" id="X02405">
    <property type="protein sequence ID" value="CAA26252.1"/>
    <property type="molecule type" value="Genomic_DNA"/>
</dbReference>
<dbReference type="EMBL" id="U00096">
    <property type="protein sequence ID" value="AAC74635.1"/>
    <property type="molecule type" value="Genomic_DNA"/>
</dbReference>
<dbReference type="EMBL" id="AP009048">
    <property type="protein sequence ID" value="BAA15261.1"/>
    <property type="molecule type" value="Genomic_DNA"/>
</dbReference>
<dbReference type="PIR" id="E64911">
    <property type="entry name" value="QQECR5"/>
</dbReference>
<dbReference type="RefSeq" id="NP_416080.1">
    <property type="nucleotide sequence ID" value="NC_000913.3"/>
</dbReference>
<dbReference type="RefSeq" id="WP_000813254.1">
    <property type="nucleotide sequence ID" value="NZ_SSZK01000019.1"/>
</dbReference>
<dbReference type="SMR" id="P0ACG6"/>
<dbReference type="BioGRID" id="4260242">
    <property type="interactions" value="117"/>
</dbReference>
<dbReference type="FunCoup" id="P0ACG6">
    <property type="interactions" value="25"/>
</dbReference>
<dbReference type="STRING" id="511145.b1562"/>
<dbReference type="PaxDb" id="511145-b1562"/>
<dbReference type="EnsemblBacteria" id="AAC74635">
    <property type="protein sequence ID" value="AAC74635"/>
    <property type="gene ID" value="b1562"/>
</dbReference>
<dbReference type="GeneID" id="93775336"/>
<dbReference type="GeneID" id="948616"/>
<dbReference type="KEGG" id="ecj:JW1554"/>
<dbReference type="KEGG" id="eco:b1562"/>
<dbReference type="KEGG" id="ecoc:C3026_09015"/>
<dbReference type="PATRIC" id="fig|1411691.4.peg.700"/>
<dbReference type="EchoBASE" id="EB1120"/>
<dbReference type="eggNOG" id="ENOG50334M8">
    <property type="taxonomic scope" value="Bacteria"/>
</dbReference>
<dbReference type="HOGENOM" id="CLU_177638_2_0_6"/>
<dbReference type="InParanoid" id="P0ACG6"/>
<dbReference type="OMA" id="CEVRIRS"/>
<dbReference type="OrthoDB" id="6556178at2"/>
<dbReference type="PhylomeDB" id="P0ACG6"/>
<dbReference type="BioCyc" id="EcoCyc:EG11130-MONOMER"/>
<dbReference type="PRO" id="PR:P0ACG6"/>
<dbReference type="Proteomes" id="UP000000625">
    <property type="component" value="Chromosome"/>
</dbReference>
<dbReference type="GO" id="GO:0016020">
    <property type="term" value="C:membrane"/>
    <property type="evidence" value="ECO:0000314"/>
    <property type="project" value="EcoCyc"/>
</dbReference>
<dbReference type="GO" id="GO:0005886">
    <property type="term" value="C:plasma membrane"/>
    <property type="evidence" value="ECO:0007669"/>
    <property type="project" value="UniProtKB-SubCell"/>
</dbReference>
<dbReference type="InterPro" id="IPR000021">
    <property type="entry name" value="Hok/gef_toxin"/>
</dbReference>
<dbReference type="InterPro" id="IPR018084">
    <property type="entry name" value="Hok/gef_toxin_CS"/>
</dbReference>
<dbReference type="Pfam" id="PF01848">
    <property type="entry name" value="HOK_GEF"/>
    <property type="match status" value="1"/>
</dbReference>
<dbReference type="PRINTS" id="PR00281">
    <property type="entry name" value="HOKGEFTOXIC"/>
</dbReference>
<dbReference type="PROSITE" id="PS00556">
    <property type="entry name" value="HOK_GEF"/>
    <property type="match status" value="1"/>
</dbReference>
<feature type="chain" id="PRO_0000199033" description="Toxic protein HokD">
    <location>
        <begin position="1"/>
        <end position="51"/>
    </location>
</feature>
<feature type="transmembrane region" description="Helical" evidence="2">
    <location>
        <begin position="5"/>
        <end position="25"/>
    </location>
</feature>
<feature type="sequence conflict" description="In Ref. 1; CAA26252." evidence="5" ref="1">
    <original>G</original>
    <variation>D</variation>
    <location>
        <position position="37"/>
    </location>
</feature>
<reference key="1">
    <citation type="journal article" date="1985" name="EMBO J.">
        <title>Sequence of the relB transcription unit from Escherichia coli and identification of the relB gene.</title>
        <authorList>
            <person name="Bech F.W."/>
            <person name="Joergensen S.T."/>
            <person name="Diderichsen B."/>
            <person name="Karlstroem O.H."/>
        </authorList>
    </citation>
    <scope>NUCLEOTIDE SEQUENCE [GENOMIC DNA]</scope>
    <source>
        <strain>K12 / CS520</strain>
    </source>
</reference>
<reference key="2">
    <citation type="journal article" date="1996" name="DNA Res.">
        <title>A 570-kb DNA sequence of the Escherichia coli K-12 genome corresponding to the 28.0-40.1 min region on the linkage map.</title>
        <authorList>
            <person name="Aiba H."/>
            <person name="Baba T."/>
            <person name="Fujita K."/>
            <person name="Hayashi K."/>
            <person name="Inada T."/>
            <person name="Isono K."/>
            <person name="Itoh T."/>
            <person name="Kasai H."/>
            <person name="Kashimoto K."/>
            <person name="Kimura S."/>
            <person name="Kitakawa M."/>
            <person name="Kitagawa M."/>
            <person name="Makino K."/>
            <person name="Miki T."/>
            <person name="Mizobuchi K."/>
            <person name="Mori H."/>
            <person name="Mori T."/>
            <person name="Motomura K."/>
            <person name="Nakade S."/>
            <person name="Nakamura Y."/>
            <person name="Nashimoto H."/>
            <person name="Nishio Y."/>
            <person name="Oshima T."/>
            <person name="Saito N."/>
            <person name="Sampei G."/>
            <person name="Seki Y."/>
            <person name="Sivasundaram S."/>
            <person name="Tagami H."/>
            <person name="Takeda J."/>
            <person name="Takemoto K."/>
            <person name="Takeuchi Y."/>
            <person name="Wada C."/>
            <person name="Yamamoto Y."/>
            <person name="Horiuchi T."/>
        </authorList>
    </citation>
    <scope>NUCLEOTIDE SEQUENCE [LARGE SCALE GENOMIC DNA]</scope>
    <source>
        <strain>K12 / W3110 / ATCC 27325 / DSM 5911</strain>
    </source>
</reference>
<reference key="3">
    <citation type="journal article" date="1997" name="Science">
        <title>The complete genome sequence of Escherichia coli K-12.</title>
        <authorList>
            <person name="Blattner F.R."/>
            <person name="Plunkett G. III"/>
            <person name="Bloch C.A."/>
            <person name="Perna N.T."/>
            <person name="Burland V."/>
            <person name="Riley M."/>
            <person name="Collado-Vides J."/>
            <person name="Glasner J.D."/>
            <person name="Rode C.K."/>
            <person name="Mayhew G.F."/>
            <person name="Gregor J."/>
            <person name="Davis N.W."/>
            <person name="Kirkpatrick H.A."/>
            <person name="Goeden M.A."/>
            <person name="Rose D.J."/>
            <person name="Mau B."/>
            <person name="Shao Y."/>
        </authorList>
    </citation>
    <scope>NUCLEOTIDE SEQUENCE [LARGE SCALE GENOMIC DNA]</scope>
    <source>
        <strain>K12 / MG1655 / ATCC 47076</strain>
    </source>
</reference>
<reference key="4">
    <citation type="journal article" date="2006" name="Mol. Syst. Biol.">
        <title>Highly accurate genome sequences of Escherichia coli K-12 strains MG1655 and W3110.</title>
        <authorList>
            <person name="Hayashi K."/>
            <person name="Morooka N."/>
            <person name="Yamamoto Y."/>
            <person name="Fujita K."/>
            <person name="Isono K."/>
            <person name="Choi S."/>
            <person name="Ohtsubo E."/>
            <person name="Baba T."/>
            <person name="Wanner B.L."/>
            <person name="Mori H."/>
            <person name="Horiuchi T."/>
        </authorList>
    </citation>
    <scope>NUCLEOTIDE SEQUENCE [LARGE SCALE GENOMIC DNA]</scope>
    <source>
        <strain>K12 / W3110 / ATCC 27325 / DSM 5911</strain>
    </source>
</reference>
<reference key="5">
    <citation type="journal article" date="1986" name="EMBO J.">
        <title>Mechanism of postsegregational killing by the hok gene product of the parB system of plasmid R1 and its homology with the relF gene product of the E. coli relB operon.</title>
        <authorList>
            <person name="Gerdes K."/>
            <person name="Bech F.W."/>
            <person name="Joergensen S.T."/>
            <person name="Loebner-Olesen A."/>
            <person name="Rasmussen P.B."/>
            <person name="Atlung T."/>
            <person name="Boe L."/>
            <person name="Karlstrom O."/>
            <person name="Molin S."/>
            <person name="von Meyenburg K."/>
        </authorList>
    </citation>
    <scope>FUNCTION</scope>
    <scope>SUBCELLULAR LOCATION</scope>
    <source>
        <strain>K12</strain>
    </source>
</reference>
<reference key="6">
    <citation type="journal article" date="1999" name="Mol. Microbiol.">
        <title>Multiple hok genes on the chromosome of Escherichia coli.</title>
        <authorList>
            <person name="Pedersen K."/>
            <person name="Gerdes K."/>
        </authorList>
    </citation>
    <scope>DISCUSSION OF SEQUENCE</scope>
</reference>
<evidence type="ECO:0000250" key="1">
    <source>
        <dbReference type="UniProtKB" id="P0ACG4"/>
    </source>
</evidence>
<evidence type="ECO:0000255" key="2"/>
<evidence type="ECO:0000269" key="3">
    <source>
    </source>
</evidence>
<evidence type="ECO:0000303" key="4">
    <source>
    </source>
</evidence>
<evidence type="ECO:0000305" key="5"/>
<evidence type="ECO:0000305" key="6">
    <source>
    </source>
</evidence>
<evidence type="ECO:0000305" key="7">
    <source>
    </source>
</evidence>
<accession>P0ACG6</accession>
<accession>P07009</accession>
<accession>P77643</accession>
<accession>Q8X294</accession>
<keyword id="KW-0997">Cell inner membrane</keyword>
<keyword id="KW-1003">Cell membrane</keyword>
<keyword id="KW-0472">Membrane</keyword>
<keyword id="KW-1185">Reference proteome</keyword>
<keyword id="KW-1277">Toxin-antitoxin system</keyword>
<keyword id="KW-0812">Transmembrane</keyword>
<keyword id="KW-1133">Transmembrane helix</keyword>
<protein>
    <recommendedName>
        <fullName>Toxic protein HokD</fullName>
    </recommendedName>
    <alternativeName>
        <fullName>Protein RelF</fullName>
    </alternativeName>
</protein>
<comment type="function">
    <text evidence="3 5">Toxic component of a type I toxin-antitoxin (TA) system (Probable). When overexpressed kills cells within 2 minutes; causes collapse of the transmembrane potential and arrest of respiration (PubMed:3019679).</text>
</comment>
<comment type="subcellular location">
    <subcellularLocation>
        <location evidence="1 7">Cell inner membrane</location>
        <topology evidence="1">Single-pass membrane protein</topology>
    </subcellularLocation>
</comment>
<comment type="miscellaneous">
    <text evidence="6">Probably inactive in strain K12 MG1655 due to a genetic locus rearrangement, the locus for its antisense antitoxin RNA is missing.</text>
</comment>
<comment type="similarity">
    <text evidence="5">Belongs to the Hok/Gef family.</text>
</comment>
<gene>
    <name evidence="4" type="primary">hokD</name>
    <name type="synonym">relF</name>
    <name type="ordered locus">b1562</name>
    <name type="ordered locus">JW1554</name>
</gene>